<accession>O14099</accession>
<keyword id="KW-0479">Metal-binding</keyword>
<keyword id="KW-1185">Reference proteome</keyword>
<keyword id="KW-0862">Zinc</keyword>
<keyword id="KW-0863">Zinc-finger</keyword>
<proteinExistence type="predicted"/>
<organism>
    <name type="scientific">Schizosaccharomyces pombe (strain 972 / ATCC 24843)</name>
    <name type="common">Fission yeast</name>
    <dbReference type="NCBI Taxonomy" id="284812"/>
    <lineage>
        <taxon>Eukaryota</taxon>
        <taxon>Fungi</taxon>
        <taxon>Dikarya</taxon>
        <taxon>Ascomycota</taxon>
        <taxon>Taphrinomycotina</taxon>
        <taxon>Schizosaccharomycetes</taxon>
        <taxon>Schizosaccharomycetales</taxon>
        <taxon>Schizosaccharomycetaceae</taxon>
        <taxon>Schizosaccharomyces</taxon>
    </lineage>
</organism>
<name>YERG_SCHPO</name>
<protein>
    <recommendedName>
        <fullName>Uncharacterized RING finger protein C2F3.16</fullName>
    </recommendedName>
</protein>
<dbReference type="EMBL" id="CU329670">
    <property type="protein sequence ID" value="CAB16270.1"/>
    <property type="molecule type" value="Genomic_DNA"/>
</dbReference>
<dbReference type="PIR" id="T38548">
    <property type="entry name" value="T38548"/>
</dbReference>
<dbReference type="RefSeq" id="NP_594394.1">
    <property type="nucleotide sequence ID" value="NM_001019817.2"/>
</dbReference>
<dbReference type="SMR" id="O14099"/>
<dbReference type="BioGRID" id="278105">
    <property type="interactions" value="12"/>
</dbReference>
<dbReference type="FunCoup" id="O14099">
    <property type="interactions" value="552"/>
</dbReference>
<dbReference type="iPTMnet" id="O14099"/>
<dbReference type="PaxDb" id="4896-SPAC2F3.16.1"/>
<dbReference type="EnsemblFungi" id="SPAC2F3.16.1">
    <property type="protein sequence ID" value="SPAC2F3.16.1:pep"/>
    <property type="gene ID" value="SPAC2F3.16"/>
</dbReference>
<dbReference type="KEGG" id="spo:2541608"/>
<dbReference type="PomBase" id="SPAC2F3.16"/>
<dbReference type="VEuPathDB" id="FungiDB:SPAC2F3.16"/>
<dbReference type="eggNOG" id="KOG1940">
    <property type="taxonomic scope" value="Eukaryota"/>
</dbReference>
<dbReference type="HOGENOM" id="CLU_013368_2_0_1"/>
<dbReference type="InParanoid" id="O14099"/>
<dbReference type="OMA" id="HATQNTR"/>
<dbReference type="PhylomeDB" id="O14099"/>
<dbReference type="PRO" id="PR:O14099"/>
<dbReference type="Proteomes" id="UP000002485">
    <property type="component" value="Chromosome I"/>
</dbReference>
<dbReference type="GO" id="GO:0005634">
    <property type="term" value="C:nucleus"/>
    <property type="evidence" value="ECO:0000318"/>
    <property type="project" value="GO_Central"/>
</dbReference>
<dbReference type="GO" id="GO:0061630">
    <property type="term" value="F:ubiquitin protein ligase activity"/>
    <property type="evidence" value="ECO:0000318"/>
    <property type="project" value="GO_Central"/>
</dbReference>
<dbReference type="GO" id="GO:0008270">
    <property type="term" value="F:zinc ion binding"/>
    <property type="evidence" value="ECO:0000255"/>
    <property type="project" value="PomBase"/>
</dbReference>
<dbReference type="GO" id="GO:0043161">
    <property type="term" value="P:proteasome-mediated ubiquitin-dependent protein catabolic process"/>
    <property type="evidence" value="ECO:0000250"/>
    <property type="project" value="PomBase"/>
</dbReference>
<dbReference type="GO" id="GO:0016567">
    <property type="term" value="P:protein ubiquitination"/>
    <property type="evidence" value="ECO:0000318"/>
    <property type="project" value="GO_Central"/>
</dbReference>
<dbReference type="GO" id="GO:0006511">
    <property type="term" value="P:ubiquitin-dependent protein catabolic process"/>
    <property type="evidence" value="ECO:0000318"/>
    <property type="project" value="GO_Central"/>
</dbReference>
<dbReference type="CDD" id="cd16464">
    <property type="entry name" value="RING-H2_Pirh2-like"/>
    <property type="match status" value="1"/>
</dbReference>
<dbReference type="Gene3D" id="2.20.28.10">
    <property type="match status" value="1"/>
</dbReference>
<dbReference type="Gene3D" id="3.30.40.10">
    <property type="entry name" value="Zinc/RING finger domain, C3HC4 (zinc finger)"/>
    <property type="match status" value="1"/>
</dbReference>
<dbReference type="InterPro" id="IPR039512">
    <property type="entry name" value="RCHY1_zinc-ribbon"/>
</dbReference>
<dbReference type="InterPro" id="IPR008913">
    <property type="entry name" value="Znf_CHY"/>
</dbReference>
<dbReference type="InterPro" id="IPR037274">
    <property type="entry name" value="Znf_CHY_sf"/>
</dbReference>
<dbReference type="InterPro" id="IPR017921">
    <property type="entry name" value="Znf_CTCHY"/>
</dbReference>
<dbReference type="InterPro" id="IPR037275">
    <property type="entry name" value="Znf_CTCHY_sf"/>
</dbReference>
<dbReference type="InterPro" id="IPR001841">
    <property type="entry name" value="Znf_RING"/>
</dbReference>
<dbReference type="InterPro" id="IPR013083">
    <property type="entry name" value="Znf_RING/FYVE/PHD"/>
</dbReference>
<dbReference type="PANTHER" id="PTHR21319:SF0">
    <property type="entry name" value="AND RING FINGER DOMAIN PROTEIN, PUTATIVE (AFU_ORTHOLOGUE AFUA_1G08900)-RELATED"/>
    <property type="match status" value="1"/>
</dbReference>
<dbReference type="PANTHER" id="PTHR21319">
    <property type="entry name" value="RING FINGER AND CHY ZINC FINGER DOMAIN-CONTAINING PROTEIN 1"/>
    <property type="match status" value="1"/>
</dbReference>
<dbReference type="Pfam" id="PF05495">
    <property type="entry name" value="zf-CHY"/>
    <property type="match status" value="1"/>
</dbReference>
<dbReference type="Pfam" id="PF13639">
    <property type="entry name" value="zf-RING_2"/>
    <property type="match status" value="1"/>
</dbReference>
<dbReference type="Pfam" id="PF14599">
    <property type="entry name" value="zinc_ribbon_6"/>
    <property type="match status" value="1"/>
</dbReference>
<dbReference type="SMART" id="SM00184">
    <property type="entry name" value="RING"/>
    <property type="match status" value="1"/>
</dbReference>
<dbReference type="SUPFAM" id="SSF161219">
    <property type="entry name" value="CHY zinc finger-like"/>
    <property type="match status" value="1"/>
</dbReference>
<dbReference type="SUPFAM" id="SSF57850">
    <property type="entry name" value="RING/U-box"/>
    <property type="match status" value="1"/>
</dbReference>
<dbReference type="SUPFAM" id="SSF161245">
    <property type="entry name" value="Zinc hairpin stack"/>
    <property type="match status" value="1"/>
</dbReference>
<dbReference type="PROSITE" id="PS51266">
    <property type="entry name" value="ZF_CHY"/>
    <property type="match status" value="1"/>
</dbReference>
<dbReference type="PROSITE" id="PS51270">
    <property type="entry name" value="ZF_CTCHY"/>
    <property type="match status" value="1"/>
</dbReference>
<dbReference type="PROSITE" id="PS50089">
    <property type="entry name" value="ZF_RING_2"/>
    <property type="match status" value="1"/>
</dbReference>
<feature type="chain" id="PRO_0000310483" description="Uncharacterized RING finger protein C2F3.16">
    <location>
        <begin position="1"/>
        <end position="425"/>
    </location>
</feature>
<feature type="zinc finger region" description="CHY-type" evidence="2">
    <location>
        <begin position="135"/>
        <end position="202"/>
    </location>
</feature>
<feature type="zinc finger region" description="CTCHY-type" evidence="3">
    <location>
        <begin position="204"/>
        <end position="270"/>
    </location>
</feature>
<feature type="zinc finger region" description="RING-type; atypical" evidence="1">
    <location>
        <begin position="271"/>
        <end position="313"/>
    </location>
</feature>
<feature type="binding site" evidence="2">
    <location>
        <position position="142"/>
    </location>
    <ligand>
        <name>Zn(2+)</name>
        <dbReference type="ChEBI" id="CHEBI:29105"/>
        <label>1</label>
    </ligand>
</feature>
<feature type="binding site" evidence="2">
    <location>
        <position position="144"/>
    </location>
    <ligand>
        <name>Zn(2+)</name>
        <dbReference type="ChEBI" id="CHEBI:29105"/>
        <label>1</label>
    </ligand>
</feature>
<feature type="binding site" evidence="2">
    <location>
        <position position="153"/>
    </location>
    <ligand>
        <name>Zn(2+)</name>
        <dbReference type="ChEBI" id="CHEBI:29105"/>
        <label>2</label>
    </ligand>
</feature>
<feature type="binding site" evidence="2">
    <location>
        <position position="156"/>
    </location>
    <ligand>
        <name>Zn(2+)</name>
        <dbReference type="ChEBI" id="CHEBI:29105"/>
        <label>2</label>
    </ligand>
</feature>
<feature type="binding site" evidence="2">
    <location>
        <position position="162"/>
    </location>
    <ligand>
        <name>Zn(2+)</name>
        <dbReference type="ChEBI" id="CHEBI:29105"/>
        <label>1</label>
    </ligand>
</feature>
<feature type="binding site" evidence="2">
    <location>
        <position position="165"/>
    </location>
    <ligand>
        <name>Zn(2+)</name>
        <dbReference type="ChEBI" id="CHEBI:29105"/>
        <label>1</label>
    </ligand>
</feature>
<feature type="binding site" evidence="2">
    <location>
        <position position="166"/>
    </location>
    <ligand>
        <name>Zn(2+)</name>
        <dbReference type="ChEBI" id="CHEBI:29105"/>
        <label>2</label>
    </ligand>
</feature>
<feature type="binding site" evidence="2">
    <location>
        <position position="172"/>
    </location>
    <ligand>
        <name>Zn(2+)</name>
        <dbReference type="ChEBI" id="CHEBI:29105"/>
        <label>2</label>
    </ligand>
</feature>
<feature type="binding site" evidence="2">
    <location>
        <position position="184"/>
    </location>
    <ligand>
        <name>Zn(2+)</name>
        <dbReference type="ChEBI" id="CHEBI:29105"/>
        <label>3</label>
    </ligand>
</feature>
<feature type="binding site" evidence="2">
    <location>
        <position position="187"/>
    </location>
    <ligand>
        <name>Zn(2+)</name>
        <dbReference type="ChEBI" id="CHEBI:29105"/>
        <label>3</label>
    </ligand>
</feature>
<feature type="binding site" evidence="2">
    <location>
        <position position="197"/>
    </location>
    <ligand>
        <name>Zn(2+)</name>
        <dbReference type="ChEBI" id="CHEBI:29105"/>
        <label>3</label>
    </ligand>
</feature>
<feature type="binding site" evidence="2">
    <location>
        <position position="200"/>
    </location>
    <ligand>
        <name>Zn(2+)</name>
        <dbReference type="ChEBI" id="CHEBI:29105"/>
        <label>3</label>
    </ligand>
</feature>
<feature type="binding site" evidence="3">
    <location>
        <position position="209"/>
    </location>
    <ligand>
        <name>Zn(2+)</name>
        <dbReference type="ChEBI" id="CHEBI:29105"/>
        <label>4</label>
    </ligand>
</feature>
<feature type="binding site" evidence="3">
    <location>
        <position position="212"/>
    </location>
    <ligand>
        <name>Zn(2+)</name>
        <dbReference type="ChEBI" id="CHEBI:29105"/>
        <label>4</label>
    </ligand>
</feature>
<feature type="binding site" evidence="3">
    <location>
        <position position="225"/>
    </location>
    <ligand>
        <name>Zn(2+)</name>
        <dbReference type="ChEBI" id="CHEBI:29105"/>
        <label>4</label>
    </ligand>
</feature>
<feature type="binding site" evidence="3">
    <location>
        <position position="226"/>
    </location>
    <ligand>
        <name>Zn(2+)</name>
        <dbReference type="ChEBI" id="CHEBI:29105"/>
        <label>5</label>
    </ligand>
</feature>
<feature type="binding site" evidence="3">
    <location>
        <position position="229"/>
    </location>
    <ligand>
        <name>Zn(2+)</name>
        <dbReference type="ChEBI" id="CHEBI:29105"/>
        <label>5</label>
    </ligand>
</feature>
<feature type="binding site" evidence="3">
    <location>
        <position position="232"/>
    </location>
    <ligand>
        <name>Zn(2+)</name>
        <dbReference type="ChEBI" id="CHEBI:29105"/>
        <label>4</label>
    </ligand>
</feature>
<feature type="binding site" evidence="3">
    <location>
        <position position="244"/>
    </location>
    <ligand>
        <name>Zn(2+)</name>
        <dbReference type="ChEBI" id="CHEBI:29105"/>
        <label>5</label>
    </ligand>
</feature>
<feature type="binding site" evidence="3">
    <location>
        <position position="245"/>
    </location>
    <ligand>
        <name>Zn(2+)</name>
        <dbReference type="ChEBI" id="CHEBI:29105"/>
        <label>6</label>
    </ligand>
</feature>
<feature type="binding site" evidence="3">
    <location>
        <position position="248"/>
    </location>
    <ligand>
        <name>Zn(2+)</name>
        <dbReference type="ChEBI" id="CHEBI:29105"/>
        <label>6</label>
    </ligand>
</feature>
<feature type="binding site" evidence="3">
    <location>
        <position position="251"/>
    </location>
    <ligand>
        <name>Zn(2+)</name>
        <dbReference type="ChEBI" id="CHEBI:29105"/>
        <label>5</label>
    </ligand>
</feature>
<feature type="binding site" evidence="3">
    <location>
        <position position="260"/>
    </location>
    <ligand>
        <name>Zn(2+)</name>
        <dbReference type="ChEBI" id="CHEBI:29105"/>
        <label>6</label>
    </ligand>
</feature>
<feature type="binding site" evidence="3">
    <location>
        <position position="262"/>
    </location>
    <ligand>
        <name>Zn(2+)</name>
        <dbReference type="ChEBI" id="CHEBI:29105"/>
        <label>6</label>
    </ligand>
</feature>
<gene>
    <name type="ORF">SPAC2F3.16</name>
</gene>
<evidence type="ECO:0000255" key="1">
    <source>
        <dbReference type="PROSITE-ProRule" id="PRU00175"/>
    </source>
</evidence>
<evidence type="ECO:0000255" key="2">
    <source>
        <dbReference type="PROSITE-ProRule" id="PRU00601"/>
    </source>
</evidence>
<evidence type="ECO:0000255" key="3">
    <source>
        <dbReference type="PROSITE-ProRule" id="PRU00965"/>
    </source>
</evidence>
<reference key="1">
    <citation type="journal article" date="2002" name="Nature">
        <title>The genome sequence of Schizosaccharomyces pombe.</title>
        <authorList>
            <person name="Wood V."/>
            <person name="Gwilliam R."/>
            <person name="Rajandream M.A."/>
            <person name="Lyne M.H."/>
            <person name="Lyne R."/>
            <person name="Stewart A."/>
            <person name="Sgouros J.G."/>
            <person name="Peat N."/>
            <person name="Hayles J."/>
            <person name="Baker S.G."/>
            <person name="Basham D."/>
            <person name="Bowman S."/>
            <person name="Brooks K."/>
            <person name="Brown D."/>
            <person name="Brown S."/>
            <person name="Chillingworth T."/>
            <person name="Churcher C.M."/>
            <person name="Collins M."/>
            <person name="Connor R."/>
            <person name="Cronin A."/>
            <person name="Davis P."/>
            <person name="Feltwell T."/>
            <person name="Fraser A."/>
            <person name="Gentles S."/>
            <person name="Goble A."/>
            <person name="Hamlin N."/>
            <person name="Harris D.E."/>
            <person name="Hidalgo J."/>
            <person name="Hodgson G."/>
            <person name="Holroyd S."/>
            <person name="Hornsby T."/>
            <person name="Howarth S."/>
            <person name="Huckle E.J."/>
            <person name="Hunt S."/>
            <person name="Jagels K."/>
            <person name="James K.D."/>
            <person name="Jones L."/>
            <person name="Jones M."/>
            <person name="Leather S."/>
            <person name="McDonald S."/>
            <person name="McLean J."/>
            <person name="Mooney P."/>
            <person name="Moule S."/>
            <person name="Mungall K.L."/>
            <person name="Murphy L.D."/>
            <person name="Niblett D."/>
            <person name="Odell C."/>
            <person name="Oliver K."/>
            <person name="O'Neil S."/>
            <person name="Pearson D."/>
            <person name="Quail M.A."/>
            <person name="Rabbinowitsch E."/>
            <person name="Rutherford K.M."/>
            <person name="Rutter S."/>
            <person name="Saunders D."/>
            <person name="Seeger K."/>
            <person name="Sharp S."/>
            <person name="Skelton J."/>
            <person name="Simmonds M.N."/>
            <person name="Squares R."/>
            <person name="Squares S."/>
            <person name="Stevens K."/>
            <person name="Taylor K."/>
            <person name="Taylor R.G."/>
            <person name="Tivey A."/>
            <person name="Walsh S.V."/>
            <person name="Warren T."/>
            <person name="Whitehead S."/>
            <person name="Woodward J.R."/>
            <person name="Volckaert G."/>
            <person name="Aert R."/>
            <person name="Robben J."/>
            <person name="Grymonprez B."/>
            <person name="Weltjens I."/>
            <person name="Vanstreels E."/>
            <person name="Rieger M."/>
            <person name="Schaefer M."/>
            <person name="Mueller-Auer S."/>
            <person name="Gabel C."/>
            <person name="Fuchs M."/>
            <person name="Duesterhoeft A."/>
            <person name="Fritzc C."/>
            <person name="Holzer E."/>
            <person name="Moestl D."/>
            <person name="Hilbert H."/>
            <person name="Borzym K."/>
            <person name="Langer I."/>
            <person name="Beck A."/>
            <person name="Lehrach H."/>
            <person name="Reinhardt R."/>
            <person name="Pohl T.M."/>
            <person name="Eger P."/>
            <person name="Zimmermann W."/>
            <person name="Wedler H."/>
            <person name="Wambutt R."/>
            <person name="Purnelle B."/>
            <person name="Goffeau A."/>
            <person name="Cadieu E."/>
            <person name="Dreano S."/>
            <person name="Gloux S."/>
            <person name="Lelaure V."/>
            <person name="Mottier S."/>
            <person name="Galibert F."/>
            <person name="Aves S.J."/>
            <person name="Xiang Z."/>
            <person name="Hunt C."/>
            <person name="Moore K."/>
            <person name="Hurst S.M."/>
            <person name="Lucas M."/>
            <person name="Rochet M."/>
            <person name="Gaillardin C."/>
            <person name="Tallada V.A."/>
            <person name="Garzon A."/>
            <person name="Thode G."/>
            <person name="Daga R.R."/>
            <person name="Cruzado L."/>
            <person name="Jimenez J."/>
            <person name="Sanchez M."/>
            <person name="del Rey F."/>
            <person name="Benito J."/>
            <person name="Dominguez A."/>
            <person name="Revuelta J.L."/>
            <person name="Moreno S."/>
            <person name="Armstrong J."/>
            <person name="Forsburg S.L."/>
            <person name="Cerutti L."/>
            <person name="Lowe T."/>
            <person name="McCombie W.R."/>
            <person name="Paulsen I."/>
            <person name="Potashkin J."/>
            <person name="Shpakovski G.V."/>
            <person name="Ussery D."/>
            <person name="Barrell B.G."/>
            <person name="Nurse P."/>
        </authorList>
    </citation>
    <scope>NUCLEOTIDE SEQUENCE [LARGE SCALE GENOMIC DNA]</scope>
    <source>
        <strain>972 / ATCC 24843</strain>
    </source>
</reference>
<sequence length="425" mass="49905">MSLSEYLREFAEIFEEAAQELTSIFELPPDLLKDITEEDVGTDDSCNKKFLEVQKQKEDEEDEEILKGVDLTQQDSVREKIHEIQSMSQLSEKRKALLMQKMLMSGYLKYRRTHKKESDENQLSSSDLEKTYYDKEQEILGCSHYMRNCKVQCFDCHEWYTCRHCHNDACDHVLERPAVENMLCMICSKVQPAAQYCKYCKNCMGRYYCNKCKLWDDDPNKSSYHCDDCGICRIGRGLGDDYFHCKTCGLCLPISVFNTHRCIERSTDCNCPICGEYMFNSRERVIFLSCSHPLHQRCHEEYIRTNYRCPTCYKTIINVNSLFRILDMEIERQPMPYPYNTWISTIRCNDCNSRCDTKYHFLGHKCNSCHSYNTCISSIYKPLDHPQVSIPRLATAEDAGMRRLMGHSWDNSDEDFNIFGIHSFI</sequence>